<gene>
    <name evidence="1" type="primary">efp</name>
    <name type="ordered locus">Pro_0026</name>
</gene>
<organism>
    <name type="scientific">Prochlorococcus marinus (strain SARG / CCMP1375 / SS120)</name>
    <dbReference type="NCBI Taxonomy" id="167539"/>
    <lineage>
        <taxon>Bacteria</taxon>
        <taxon>Bacillati</taxon>
        <taxon>Cyanobacteriota</taxon>
        <taxon>Cyanophyceae</taxon>
        <taxon>Synechococcales</taxon>
        <taxon>Prochlorococcaceae</taxon>
        <taxon>Prochlorococcus</taxon>
    </lineage>
</organism>
<reference key="1">
    <citation type="journal article" date="2003" name="Proc. Natl. Acad. Sci. U.S.A.">
        <title>Genome sequence of the cyanobacterium Prochlorococcus marinus SS120, a nearly minimal oxyphototrophic genome.</title>
        <authorList>
            <person name="Dufresne A."/>
            <person name="Salanoubat M."/>
            <person name="Partensky F."/>
            <person name="Artiguenave F."/>
            <person name="Axmann I.M."/>
            <person name="Barbe V."/>
            <person name="Duprat S."/>
            <person name="Galperin M.Y."/>
            <person name="Koonin E.V."/>
            <person name="Le Gall F."/>
            <person name="Makarova K.S."/>
            <person name="Ostrowski M."/>
            <person name="Oztas S."/>
            <person name="Robert C."/>
            <person name="Rogozin I.B."/>
            <person name="Scanlan D.J."/>
            <person name="Tandeau de Marsac N."/>
            <person name="Weissenbach J."/>
            <person name="Wincker P."/>
            <person name="Wolf Y.I."/>
            <person name="Hess W.R."/>
        </authorList>
    </citation>
    <scope>NUCLEOTIDE SEQUENCE [LARGE SCALE GENOMIC DNA]</scope>
    <source>
        <strain>SARG / CCMP1375 / SS120</strain>
    </source>
</reference>
<comment type="function">
    <text evidence="1">Involved in peptide bond synthesis. Stimulates efficient translation and peptide-bond synthesis on native or reconstituted 70S ribosomes in vitro. Probably functions indirectly by altering the affinity of the ribosome for aminoacyl-tRNA, thus increasing their reactivity as acceptors for peptidyl transferase.</text>
</comment>
<comment type="pathway">
    <text evidence="1">Protein biosynthesis; polypeptide chain elongation.</text>
</comment>
<comment type="subcellular location">
    <subcellularLocation>
        <location evidence="1">Cytoplasm</location>
    </subcellularLocation>
</comment>
<comment type="similarity">
    <text evidence="1">Belongs to the elongation factor P family.</text>
</comment>
<accession>Q7VEI7</accession>
<sequence length="186" mass="20560">MISSNDFRTGTTIELDGAVWRVVEFLHVKPGKGSAFVRTKLKAVQAGNVVEKTFRAGEMVPQALLEKATLQHTYMESGDYVFMDMSTYEETRLTANQIGDSRKYLKEGMEVNVVSWNEKPLEVELPNSVVLEVKETDPGVKGDTATGGTKPAILETGAQIMVPLFISVGEKIKVDTRNDSYLGREN</sequence>
<evidence type="ECO:0000255" key="1">
    <source>
        <dbReference type="HAMAP-Rule" id="MF_00141"/>
    </source>
</evidence>
<dbReference type="EMBL" id="AE017126">
    <property type="protein sequence ID" value="AAP99072.1"/>
    <property type="molecule type" value="Genomic_DNA"/>
</dbReference>
<dbReference type="RefSeq" id="NP_874420.1">
    <property type="nucleotide sequence ID" value="NC_005042.1"/>
</dbReference>
<dbReference type="RefSeq" id="WP_011124181.1">
    <property type="nucleotide sequence ID" value="NC_005042.1"/>
</dbReference>
<dbReference type="SMR" id="Q7VEI7"/>
<dbReference type="STRING" id="167539.Pro_0026"/>
<dbReference type="EnsemblBacteria" id="AAP99072">
    <property type="protein sequence ID" value="AAP99072"/>
    <property type="gene ID" value="Pro_0026"/>
</dbReference>
<dbReference type="KEGG" id="pma:Pro_0026"/>
<dbReference type="PATRIC" id="fig|167539.5.peg.26"/>
<dbReference type="eggNOG" id="COG0231">
    <property type="taxonomic scope" value="Bacteria"/>
</dbReference>
<dbReference type="HOGENOM" id="CLU_074944_0_1_3"/>
<dbReference type="OrthoDB" id="9801844at2"/>
<dbReference type="UniPathway" id="UPA00345"/>
<dbReference type="Proteomes" id="UP000001420">
    <property type="component" value="Chromosome"/>
</dbReference>
<dbReference type="GO" id="GO:0005737">
    <property type="term" value="C:cytoplasm"/>
    <property type="evidence" value="ECO:0007669"/>
    <property type="project" value="UniProtKB-SubCell"/>
</dbReference>
<dbReference type="GO" id="GO:0003746">
    <property type="term" value="F:translation elongation factor activity"/>
    <property type="evidence" value="ECO:0007669"/>
    <property type="project" value="UniProtKB-UniRule"/>
</dbReference>
<dbReference type="GO" id="GO:0043043">
    <property type="term" value="P:peptide biosynthetic process"/>
    <property type="evidence" value="ECO:0007669"/>
    <property type="project" value="InterPro"/>
</dbReference>
<dbReference type="CDD" id="cd04470">
    <property type="entry name" value="S1_EF-P_repeat_1"/>
    <property type="match status" value="1"/>
</dbReference>
<dbReference type="CDD" id="cd05794">
    <property type="entry name" value="S1_EF-P_repeat_2"/>
    <property type="match status" value="1"/>
</dbReference>
<dbReference type="FunFam" id="2.30.30.30:FF:000003">
    <property type="entry name" value="Elongation factor P"/>
    <property type="match status" value="1"/>
</dbReference>
<dbReference type="FunFam" id="2.40.50.140:FF:000004">
    <property type="entry name" value="Elongation factor P"/>
    <property type="match status" value="1"/>
</dbReference>
<dbReference type="FunFam" id="2.40.50.140:FF:000009">
    <property type="entry name" value="Elongation factor P"/>
    <property type="match status" value="1"/>
</dbReference>
<dbReference type="Gene3D" id="2.30.30.30">
    <property type="match status" value="1"/>
</dbReference>
<dbReference type="Gene3D" id="2.40.50.140">
    <property type="entry name" value="Nucleic acid-binding proteins"/>
    <property type="match status" value="2"/>
</dbReference>
<dbReference type="HAMAP" id="MF_00141">
    <property type="entry name" value="EF_P"/>
    <property type="match status" value="1"/>
</dbReference>
<dbReference type="InterPro" id="IPR015365">
    <property type="entry name" value="Elong-fact-P_C"/>
</dbReference>
<dbReference type="InterPro" id="IPR012340">
    <property type="entry name" value="NA-bd_OB-fold"/>
</dbReference>
<dbReference type="InterPro" id="IPR014722">
    <property type="entry name" value="Rib_uL2_dom2"/>
</dbReference>
<dbReference type="InterPro" id="IPR020599">
    <property type="entry name" value="Transl_elong_fac_P/YeiP"/>
</dbReference>
<dbReference type="InterPro" id="IPR013185">
    <property type="entry name" value="Transl_elong_KOW-like"/>
</dbReference>
<dbReference type="InterPro" id="IPR001059">
    <property type="entry name" value="Transl_elong_P/YeiP_cen"/>
</dbReference>
<dbReference type="InterPro" id="IPR013852">
    <property type="entry name" value="Transl_elong_P/YeiP_CS"/>
</dbReference>
<dbReference type="InterPro" id="IPR011768">
    <property type="entry name" value="Transl_elongation_fac_P"/>
</dbReference>
<dbReference type="InterPro" id="IPR008991">
    <property type="entry name" value="Translation_prot_SH3-like_sf"/>
</dbReference>
<dbReference type="NCBIfam" id="TIGR00038">
    <property type="entry name" value="efp"/>
    <property type="match status" value="1"/>
</dbReference>
<dbReference type="NCBIfam" id="NF001810">
    <property type="entry name" value="PRK00529.1"/>
    <property type="match status" value="1"/>
</dbReference>
<dbReference type="PANTHER" id="PTHR30053">
    <property type="entry name" value="ELONGATION FACTOR P"/>
    <property type="match status" value="1"/>
</dbReference>
<dbReference type="PANTHER" id="PTHR30053:SF12">
    <property type="entry name" value="ELONGATION FACTOR P (EF-P) FAMILY PROTEIN"/>
    <property type="match status" value="1"/>
</dbReference>
<dbReference type="Pfam" id="PF01132">
    <property type="entry name" value="EFP"/>
    <property type="match status" value="1"/>
</dbReference>
<dbReference type="Pfam" id="PF08207">
    <property type="entry name" value="EFP_N"/>
    <property type="match status" value="1"/>
</dbReference>
<dbReference type="Pfam" id="PF09285">
    <property type="entry name" value="Elong-fact-P_C"/>
    <property type="match status" value="1"/>
</dbReference>
<dbReference type="PIRSF" id="PIRSF005901">
    <property type="entry name" value="EF-P"/>
    <property type="match status" value="1"/>
</dbReference>
<dbReference type="SMART" id="SM01185">
    <property type="entry name" value="EFP"/>
    <property type="match status" value="1"/>
</dbReference>
<dbReference type="SMART" id="SM00841">
    <property type="entry name" value="Elong-fact-P_C"/>
    <property type="match status" value="1"/>
</dbReference>
<dbReference type="SUPFAM" id="SSF50249">
    <property type="entry name" value="Nucleic acid-binding proteins"/>
    <property type="match status" value="2"/>
</dbReference>
<dbReference type="SUPFAM" id="SSF50104">
    <property type="entry name" value="Translation proteins SH3-like domain"/>
    <property type="match status" value="1"/>
</dbReference>
<dbReference type="PROSITE" id="PS01275">
    <property type="entry name" value="EFP"/>
    <property type="match status" value="1"/>
</dbReference>
<proteinExistence type="inferred from homology"/>
<keyword id="KW-0963">Cytoplasm</keyword>
<keyword id="KW-0251">Elongation factor</keyword>
<keyword id="KW-0648">Protein biosynthesis</keyword>
<keyword id="KW-1185">Reference proteome</keyword>
<protein>
    <recommendedName>
        <fullName evidence="1">Elongation factor P</fullName>
        <shortName evidence="1">EF-P</shortName>
    </recommendedName>
</protein>
<name>EFP_PROMA</name>
<feature type="chain" id="PRO_0000094307" description="Elongation factor P">
    <location>
        <begin position="1"/>
        <end position="186"/>
    </location>
</feature>